<protein>
    <recommendedName>
        <fullName>Docking protein 1</fullName>
    </recommendedName>
    <alternativeName>
        <fullName>Downstream of tyrosine kinase 1</fullName>
    </alternativeName>
</protein>
<accession>Q4QQV2</accession>
<gene>
    <name type="primary">Dok1</name>
</gene>
<proteinExistence type="evidence at transcript level"/>
<name>DOK1_RAT</name>
<sequence length="480" mass="52170">MDGALMEGPLFLQSQRFGTKRWKKTWAVLYPASPHGVARLEFFDHKGSSSGGGRGGSRRLDCKMIRLAECVSVVPVTVESPPEPGASAFRLDTAQRSHLLAADAASSTAWVQILCRTAFPKGGWALAQTENPPKFSALEMLENSLYSPTWEGSQFWVTSQKTEASERCGLQGSYVLRVEAEKLTLLTLGAQSQILEPLLFWPYTLLRRYGRDKVMFSFEAGRRCPSGPGTFTFQTAQGNDIFQAVEAAIQQQKAQGKVGQGQDITRTDSHDGETEGKMAPTPVPQEPLGSPPALYAEPLDSLRIPPGPSQDSLYSDPLGSTPAGAGEGVQRKKPLYWDLYGHVQQQLLKTKLIDSKEDPIYDEPEGLAPAPLRGLYDLPQEPKDAWWCQARLKEEGYELPYNPATDDYAVPPPRSSKPTPAPKPQGLILPESGTTAGSGSKGSDTALYSQVQKSGTPGRWDCGLSRVGNDRVGVKSEGST</sequence>
<keyword id="KW-0007">Acetylation</keyword>
<keyword id="KW-0963">Cytoplasm</keyword>
<keyword id="KW-0539">Nucleus</keyword>
<keyword id="KW-0597">Phosphoprotein</keyword>
<keyword id="KW-1185">Reference proteome</keyword>
<evidence type="ECO:0000250" key="1"/>
<evidence type="ECO:0000250" key="2">
    <source>
        <dbReference type="UniProtKB" id="P97465"/>
    </source>
</evidence>
<evidence type="ECO:0000250" key="3">
    <source>
        <dbReference type="UniProtKB" id="Q99704"/>
    </source>
</evidence>
<evidence type="ECO:0000255" key="4">
    <source>
        <dbReference type="PROSITE-ProRule" id="PRU00389"/>
    </source>
</evidence>
<evidence type="ECO:0000256" key="5">
    <source>
        <dbReference type="SAM" id="MobiDB-lite"/>
    </source>
</evidence>
<evidence type="ECO:0000305" key="6"/>
<comment type="function">
    <text evidence="1">DOK proteins are enzymatically inert adaptor or scaffolding proteins. They provide a docking platform for the assembly of multimolecular signaling complexes. DOK1 appears to be a negative regulator of the insulin signaling pathway. Modulates integrin activation by competing with talin for the same binding site on ITGB3 (By similarity).</text>
</comment>
<comment type="subunit">
    <text evidence="1">Interacts with RasGAP and INPP5D/SHIP1. Interacts directly with phosphorylated ITGB3 (By similarity). Interacts with SRMS (via the SH2 and SH3 domains) (By similarity).</text>
</comment>
<comment type="subcellular location">
    <subcellularLocation>
        <location evidence="1">Cytoplasm</location>
    </subcellularLocation>
    <subcellularLocation>
        <location evidence="1">Nucleus</location>
    </subcellularLocation>
</comment>
<comment type="domain">
    <text evidence="1">The PTB domain mediates receptor interaction.</text>
</comment>
<comment type="PTM">
    <text evidence="1">Constitutively tyrosine-phosphorylated (By similarity). Phosphorylated by TEC. Phosphorylated by LYN (By similarity). Phosphorylated on tyrosine residues by the insulin receptor kinase. Results in the negative regulation of the insulin signaling pathway (By similarity). Phosphorylated on tyrosine residues by SRMS (By similarity).</text>
</comment>
<comment type="similarity">
    <text evidence="6">Belongs to the DOK family. Type A subfamily.</text>
</comment>
<reference key="1">
    <citation type="journal article" date="2004" name="Genome Res.">
        <title>The status, quality, and expansion of the NIH full-length cDNA project: the Mammalian Gene Collection (MGC).</title>
        <authorList>
            <consortium name="The MGC Project Team"/>
        </authorList>
    </citation>
    <scope>NUCLEOTIDE SEQUENCE [LARGE SCALE MRNA]</scope>
    <source>
        <tissue>Placenta</tissue>
    </source>
</reference>
<dbReference type="EMBL" id="BC097972">
    <property type="protein sequence ID" value="AAH97972.1"/>
    <property type="molecule type" value="mRNA"/>
</dbReference>
<dbReference type="RefSeq" id="NP_001020587.1">
    <property type="nucleotide sequence ID" value="NM_001025416.1"/>
</dbReference>
<dbReference type="SMR" id="Q4QQV2"/>
<dbReference type="BioGRID" id="260183">
    <property type="interactions" value="4"/>
</dbReference>
<dbReference type="FunCoup" id="Q4QQV2">
    <property type="interactions" value="410"/>
</dbReference>
<dbReference type="IntAct" id="Q4QQV2">
    <property type="interactions" value="3"/>
</dbReference>
<dbReference type="MINT" id="Q4QQV2"/>
<dbReference type="STRING" id="10116.ENSRNOP00000010020"/>
<dbReference type="GlyGen" id="Q4QQV2">
    <property type="glycosylation" value="2 sites"/>
</dbReference>
<dbReference type="iPTMnet" id="Q4QQV2"/>
<dbReference type="PhosphoSitePlus" id="Q4QQV2"/>
<dbReference type="jPOST" id="Q4QQV2"/>
<dbReference type="PaxDb" id="10116-ENSRNOP00000010020"/>
<dbReference type="GeneID" id="312477"/>
<dbReference type="KEGG" id="rno:312477"/>
<dbReference type="UCSC" id="RGD:1309499">
    <property type="organism name" value="rat"/>
</dbReference>
<dbReference type="AGR" id="RGD:1309499"/>
<dbReference type="CTD" id="1796"/>
<dbReference type="RGD" id="1309499">
    <property type="gene designation" value="Dok1"/>
</dbReference>
<dbReference type="VEuPathDB" id="HostDB:ENSRNOG00000007412"/>
<dbReference type="eggNOG" id="KOG4047">
    <property type="taxonomic scope" value="Eukaryota"/>
</dbReference>
<dbReference type="HOGENOM" id="CLU_030101_3_1_1"/>
<dbReference type="InParanoid" id="Q4QQV2"/>
<dbReference type="OrthoDB" id="6243387at2759"/>
<dbReference type="PhylomeDB" id="Q4QQV2"/>
<dbReference type="TreeFam" id="TF324994"/>
<dbReference type="Reactome" id="R-RNO-8849469">
    <property type="pathway name" value="PTK6 Regulates RTKs and Their Effectors AKT1 and DOK1"/>
</dbReference>
<dbReference type="Reactome" id="R-RNO-8853659">
    <property type="pathway name" value="RET signaling"/>
</dbReference>
<dbReference type="PRO" id="PR:Q4QQV2"/>
<dbReference type="Proteomes" id="UP000002494">
    <property type="component" value="Chromosome 4"/>
</dbReference>
<dbReference type="Bgee" id="ENSRNOG00000007412">
    <property type="expression patterns" value="Expressed in spleen and 18 other cell types or tissues"/>
</dbReference>
<dbReference type="GO" id="GO:0005737">
    <property type="term" value="C:cytoplasm"/>
    <property type="evidence" value="ECO:0000318"/>
    <property type="project" value="GO_Central"/>
</dbReference>
<dbReference type="GO" id="GO:0005634">
    <property type="term" value="C:nucleus"/>
    <property type="evidence" value="ECO:0000250"/>
    <property type="project" value="UniProtKB"/>
</dbReference>
<dbReference type="GO" id="GO:0007169">
    <property type="term" value="P:cell surface receptor protein tyrosine kinase signaling pathway"/>
    <property type="evidence" value="ECO:0000266"/>
    <property type="project" value="RGD"/>
</dbReference>
<dbReference type="GO" id="GO:0035556">
    <property type="term" value="P:intracellular signal transduction"/>
    <property type="evidence" value="ECO:0000266"/>
    <property type="project" value="RGD"/>
</dbReference>
<dbReference type="GO" id="GO:0038145">
    <property type="term" value="P:macrophage colony-stimulating factor signaling pathway"/>
    <property type="evidence" value="ECO:0000266"/>
    <property type="project" value="RGD"/>
</dbReference>
<dbReference type="GO" id="GO:0007265">
    <property type="term" value="P:Ras protein signal transduction"/>
    <property type="evidence" value="ECO:0000266"/>
    <property type="project" value="RGD"/>
</dbReference>
<dbReference type="CDD" id="cd01203">
    <property type="entry name" value="PTB_DOK1_DOK2_DOK3"/>
    <property type="match status" value="1"/>
</dbReference>
<dbReference type="FunFam" id="2.30.29.30:FF:000246">
    <property type="entry name" value="Docking protein 1"/>
    <property type="match status" value="1"/>
</dbReference>
<dbReference type="Gene3D" id="2.30.29.30">
    <property type="entry name" value="Pleckstrin-homology domain (PH domain)/Phosphotyrosine-binding domain (PTB)"/>
    <property type="match status" value="2"/>
</dbReference>
<dbReference type="InterPro" id="IPR050996">
    <property type="entry name" value="Docking_Protein_DOK"/>
</dbReference>
<dbReference type="InterPro" id="IPR037751">
    <property type="entry name" value="Dok1/2/3_PTB"/>
</dbReference>
<dbReference type="InterPro" id="IPR002404">
    <property type="entry name" value="IRS_PTB"/>
</dbReference>
<dbReference type="InterPro" id="IPR011993">
    <property type="entry name" value="PH-like_dom_sf"/>
</dbReference>
<dbReference type="InterPro" id="IPR001849">
    <property type="entry name" value="PH_domain"/>
</dbReference>
<dbReference type="PANTHER" id="PTHR21258:SF46">
    <property type="entry name" value="DOCKING PROTEIN 1"/>
    <property type="match status" value="1"/>
</dbReference>
<dbReference type="PANTHER" id="PTHR21258">
    <property type="entry name" value="DOCKING PROTEIN RELATED"/>
    <property type="match status" value="1"/>
</dbReference>
<dbReference type="Pfam" id="PF02174">
    <property type="entry name" value="IRS"/>
    <property type="match status" value="1"/>
</dbReference>
<dbReference type="Pfam" id="PF00169">
    <property type="entry name" value="PH"/>
    <property type="match status" value="1"/>
</dbReference>
<dbReference type="SMART" id="SM01244">
    <property type="entry name" value="IRS"/>
    <property type="match status" value="1"/>
</dbReference>
<dbReference type="SMART" id="SM00233">
    <property type="entry name" value="PH"/>
    <property type="match status" value="1"/>
</dbReference>
<dbReference type="SMART" id="SM00310">
    <property type="entry name" value="PTBI"/>
    <property type="match status" value="1"/>
</dbReference>
<dbReference type="SUPFAM" id="SSF50729">
    <property type="entry name" value="PH domain-like"/>
    <property type="match status" value="2"/>
</dbReference>
<dbReference type="PROSITE" id="PS51064">
    <property type="entry name" value="IRS_PTB"/>
    <property type="match status" value="1"/>
</dbReference>
<organism>
    <name type="scientific">Rattus norvegicus</name>
    <name type="common">Rat</name>
    <dbReference type="NCBI Taxonomy" id="10116"/>
    <lineage>
        <taxon>Eukaryota</taxon>
        <taxon>Metazoa</taxon>
        <taxon>Chordata</taxon>
        <taxon>Craniata</taxon>
        <taxon>Vertebrata</taxon>
        <taxon>Euteleostomi</taxon>
        <taxon>Mammalia</taxon>
        <taxon>Eutheria</taxon>
        <taxon>Euarchontoglires</taxon>
        <taxon>Glires</taxon>
        <taxon>Rodentia</taxon>
        <taxon>Myomorpha</taxon>
        <taxon>Muroidea</taxon>
        <taxon>Muridae</taxon>
        <taxon>Murinae</taxon>
        <taxon>Rattus</taxon>
    </lineage>
</organism>
<feature type="chain" id="PRO_0000356279" description="Docking protein 1">
    <location>
        <begin position="1"/>
        <end position="480"/>
    </location>
</feature>
<feature type="domain" description="PH">
    <location>
        <begin position="3"/>
        <end position="119"/>
    </location>
</feature>
<feature type="domain" description="IRS-type PTB" evidence="4">
    <location>
        <begin position="151"/>
        <end position="259"/>
    </location>
</feature>
<feature type="region of interest" description="Disordered" evidence="5">
    <location>
        <begin position="253"/>
        <end position="328"/>
    </location>
</feature>
<feature type="region of interest" description="Disordered" evidence="5">
    <location>
        <begin position="398"/>
        <end position="480"/>
    </location>
</feature>
<feature type="compositionally biased region" description="Low complexity" evidence="5">
    <location>
        <begin position="253"/>
        <end position="262"/>
    </location>
</feature>
<feature type="compositionally biased region" description="Basic and acidic residues" evidence="5">
    <location>
        <begin position="265"/>
        <end position="276"/>
    </location>
</feature>
<feature type="compositionally biased region" description="Pro residues" evidence="5">
    <location>
        <begin position="410"/>
        <end position="423"/>
    </location>
</feature>
<feature type="compositionally biased region" description="Low complexity" evidence="5">
    <location>
        <begin position="432"/>
        <end position="445"/>
    </location>
</feature>
<feature type="compositionally biased region" description="Polar residues" evidence="5">
    <location>
        <begin position="446"/>
        <end position="455"/>
    </location>
</feature>
<feature type="modified residue" description="N-acetylmethionine" evidence="3">
    <location>
        <position position="1"/>
    </location>
</feature>
<feature type="modified residue" description="Phosphoserine" evidence="3">
    <location>
        <position position="48"/>
    </location>
</feature>
<feature type="modified residue" description="Phosphoserine" evidence="3">
    <location>
        <position position="269"/>
    </location>
</feature>
<feature type="modified residue" description="Phosphoserine" evidence="3">
    <location>
        <position position="290"/>
    </location>
</feature>
<feature type="modified residue" description="Phosphotyrosine" evidence="2">
    <location>
        <position position="295"/>
    </location>
</feature>
<feature type="modified residue" description="Phosphotyrosine" evidence="2">
    <location>
        <position position="336"/>
    </location>
</feature>
<feature type="modified residue" description="Phosphotyrosine" evidence="3">
    <location>
        <position position="340"/>
    </location>
</feature>
<feature type="modified residue" description="Phosphotyrosine; by INSR" evidence="3">
    <location>
        <position position="361"/>
    </location>
</feature>
<feature type="modified residue" description="Phosphotyrosine" evidence="3">
    <location>
        <position position="376"/>
    </location>
</feature>
<feature type="modified residue" description="Phosphotyrosine; by INSR" evidence="3">
    <location>
        <position position="397"/>
    </location>
</feature>
<feature type="modified residue" description="Phosphotyrosine" evidence="3">
    <location>
        <position position="408"/>
    </location>
</feature>
<feature type="modified residue" description="Phosphoserine" evidence="2">
    <location>
        <position position="415"/>
    </location>
</feature>
<feature type="modified residue" description="Phosphotyrosine" evidence="2">
    <location>
        <position position="448"/>
    </location>
</feature>